<sequence>MIRRGLLSVTAALVLLSVSCSAQETMGCADRTAINDFNATLYMGKWYEYAKMGSMPYEEGGVCVTAEYSMSSNNITVVNSMKDNTTHEVNTTTGWAEFASELHTDGKLSVHFPNSPSVGNYWILSTDYDNYSIVWSCVKRPDSAASTEISWILLRSRNSSNMTLERVEDELKNLQLDLNKYTKTEQSAKYCAGAEHVVGAMLSVAIASLFALLH</sequence>
<feature type="signal peptide" evidence="1">
    <location>
        <begin position="1"/>
        <end position="21"/>
    </location>
</feature>
<feature type="chain" id="PRO_0000017912" description="Lazarillo protein">
    <location>
        <begin position="22"/>
        <end position="192"/>
    </location>
</feature>
<feature type="propeptide" id="PRO_0000017913" description="Removed in mature form" evidence="1">
    <location>
        <begin position="193"/>
        <end position="214"/>
    </location>
</feature>
<feature type="lipid moiety-binding region" description="GPI-anchor amidated alanine" evidence="1">
    <location>
        <position position="192"/>
    </location>
</feature>
<feature type="glycosylation site" description="N-linked (GlcNAc...) asparagine" evidence="1">
    <location>
        <position position="38"/>
    </location>
</feature>
<feature type="glycosylation site" description="N-linked (GlcNAc...) asparagine" evidence="1">
    <location>
        <position position="74"/>
    </location>
</feature>
<feature type="glycosylation site" description="N-linked (GlcNAc...) asparagine" evidence="1">
    <location>
        <position position="84"/>
    </location>
</feature>
<feature type="glycosylation site" description="N-linked (GlcNAc...) asparagine" evidence="1">
    <location>
        <position position="90"/>
    </location>
</feature>
<feature type="glycosylation site" description="N-linked (GlcNAc...) asparagine">
    <location>
        <position position="130"/>
    </location>
</feature>
<feature type="glycosylation site" description="N-linked (GlcNAc...) asparagine">
    <location>
        <position position="158"/>
    </location>
</feature>
<feature type="glycosylation site" description="N-linked (GlcNAc...) asparagine">
    <location>
        <position position="161"/>
    </location>
</feature>
<keyword id="KW-1003">Cell membrane</keyword>
<keyword id="KW-0217">Developmental protein</keyword>
<keyword id="KW-0221">Differentiation</keyword>
<keyword id="KW-0903">Direct protein sequencing</keyword>
<keyword id="KW-1015">Disulfide bond</keyword>
<keyword id="KW-0325">Glycoprotein</keyword>
<keyword id="KW-0336">GPI-anchor</keyword>
<keyword id="KW-0449">Lipoprotein</keyword>
<keyword id="KW-0472">Membrane</keyword>
<keyword id="KW-0524">Neurogenesis</keyword>
<keyword id="KW-0675">Receptor</keyword>
<keyword id="KW-0732">Signal</keyword>
<organism>
    <name type="scientific">Schistocerca americana</name>
    <name type="common">American grasshopper</name>
    <dbReference type="NCBI Taxonomy" id="7009"/>
    <lineage>
        <taxon>Eukaryota</taxon>
        <taxon>Metazoa</taxon>
        <taxon>Ecdysozoa</taxon>
        <taxon>Arthropoda</taxon>
        <taxon>Hexapoda</taxon>
        <taxon>Insecta</taxon>
        <taxon>Pterygota</taxon>
        <taxon>Neoptera</taxon>
        <taxon>Polyneoptera</taxon>
        <taxon>Orthoptera</taxon>
        <taxon>Caelifera</taxon>
        <taxon>Acrididea</taxon>
        <taxon>Acridomorpha</taxon>
        <taxon>Acridoidea</taxon>
        <taxon>Acrididae</taxon>
        <taxon>Cyrtacanthacridinae</taxon>
        <taxon>Schistocerca</taxon>
    </lineage>
</organism>
<comment type="function">
    <text>Putative role in axonal outgrowth and guidance, required for the navigation of identified commissural neurons. Could be a receptor the midline morphogen.</text>
</comment>
<comment type="subcellular location">
    <subcellularLocation>
        <location>Cell membrane</location>
        <topology>Lipid-anchor</topology>
        <topology>GPI-anchor</topology>
    </subcellularLocation>
</comment>
<comment type="tissue specificity">
    <text>Expressed by a subset of neuroblasts, ganglion mother cells and neurons of the CNS; by all sensory neurons of the PNS.</text>
</comment>
<comment type="PTM">
    <text>N-glycosylated.</text>
</comment>
<comment type="PTM">
    <text>Contains disulfide bonds.</text>
</comment>
<comment type="miscellaneous">
    <text>Named after the main character of a 16th century Spanish novel, Lazarillo de Tormes, a crafty boy who guided a blind man.</text>
</comment>
<comment type="similarity">
    <text evidence="2">Belongs to the calycin superfamily. Lipocalin family.</text>
</comment>
<dbReference type="EMBL" id="Z38071">
    <property type="protein sequence ID" value="CAA86216.1"/>
    <property type="molecule type" value="mRNA"/>
</dbReference>
<dbReference type="EMBL" id="U15656">
    <property type="protein sequence ID" value="AAC46605.1"/>
    <property type="molecule type" value="mRNA"/>
</dbReference>
<dbReference type="SMR" id="P49291"/>
<dbReference type="OrthoDB" id="565904at2759"/>
<dbReference type="GO" id="GO:0005737">
    <property type="term" value="C:cytoplasm"/>
    <property type="evidence" value="ECO:0007669"/>
    <property type="project" value="TreeGrafter"/>
</dbReference>
<dbReference type="GO" id="GO:0005886">
    <property type="term" value="C:plasma membrane"/>
    <property type="evidence" value="ECO:0007669"/>
    <property type="project" value="UniProtKB-SubCell"/>
</dbReference>
<dbReference type="GO" id="GO:0098552">
    <property type="term" value="C:side of membrane"/>
    <property type="evidence" value="ECO:0007669"/>
    <property type="project" value="UniProtKB-KW"/>
</dbReference>
<dbReference type="GO" id="GO:0031409">
    <property type="term" value="F:pigment binding"/>
    <property type="evidence" value="ECO:0007669"/>
    <property type="project" value="InterPro"/>
</dbReference>
<dbReference type="GO" id="GO:0030154">
    <property type="term" value="P:cell differentiation"/>
    <property type="evidence" value="ECO:0007669"/>
    <property type="project" value="UniProtKB-KW"/>
</dbReference>
<dbReference type="GO" id="GO:0006629">
    <property type="term" value="P:lipid metabolic process"/>
    <property type="evidence" value="ECO:0007669"/>
    <property type="project" value="TreeGrafter"/>
</dbReference>
<dbReference type="GO" id="GO:0007399">
    <property type="term" value="P:nervous system development"/>
    <property type="evidence" value="ECO:0007669"/>
    <property type="project" value="UniProtKB-KW"/>
</dbReference>
<dbReference type="GO" id="GO:0000302">
    <property type="term" value="P:response to reactive oxygen species"/>
    <property type="evidence" value="ECO:0007669"/>
    <property type="project" value="TreeGrafter"/>
</dbReference>
<dbReference type="CDD" id="cd19437">
    <property type="entry name" value="lipocalin_apoD-like"/>
    <property type="match status" value="1"/>
</dbReference>
<dbReference type="Gene3D" id="2.40.128.20">
    <property type="match status" value="1"/>
</dbReference>
<dbReference type="InterPro" id="IPR012674">
    <property type="entry name" value="Calycin"/>
</dbReference>
<dbReference type="InterPro" id="IPR003057">
    <property type="entry name" value="Invtbrt_color"/>
</dbReference>
<dbReference type="InterPro" id="IPR022271">
    <property type="entry name" value="Lipocalin_ApoD"/>
</dbReference>
<dbReference type="InterPro" id="IPR000566">
    <property type="entry name" value="Lipocln_cytosolic_FA-bd_dom"/>
</dbReference>
<dbReference type="PANTHER" id="PTHR10612">
    <property type="entry name" value="APOLIPOPROTEIN D"/>
    <property type="match status" value="1"/>
</dbReference>
<dbReference type="PANTHER" id="PTHR10612:SF34">
    <property type="entry name" value="APOLIPOPROTEIN D"/>
    <property type="match status" value="1"/>
</dbReference>
<dbReference type="Pfam" id="PF00061">
    <property type="entry name" value="Lipocalin"/>
    <property type="match status" value="1"/>
</dbReference>
<dbReference type="PIRSF" id="PIRSF036893">
    <property type="entry name" value="Lipocalin_ApoD"/>
    <property type="match status" value="1"/>
</dbReference>
<dbReference type="PRINTS" id="PR01273">
    <property type="entry name" value="INVTBRTCOLOR"/>
</dbReference>
<dbReference type="SUPFAM" id="SSF50814">
    <property type="entry name" value="Lipocalins"/>
    <property type="match status" value="1"/>
</dbReference>
<proteinExistence type="evidence at protein level"/>
<protein>
    <recommendedName>
        <fullName>Lazarillo protein</fullName>
    </recommendedName>
</protein>
<reference key="1">
    <citation type="journal article" date="1995" name="Development">
        <title>Lazarillo, a new GPI-linked surface lipocalin, is restricted to a subset of neurons in the grasshopper embryo.</title>
        <authorList>
            <person name="Ganfornina M.D."/>
            <person name="Sanchez D."/>
            <person name="Bastiani M.J."/>
        </authorList>
    </citation>
    <scope>NUCLEOTIDE SEQUENCE [MRNA]</scope>
    <scope>PROTEIN SEQUENCE OF 46-51; 108-134 AND 140-180</scope>
</reference>
<reference key="2">
    <citation type="journal article" date="1995" name="Development">
        <title>Developmental expression of the lipocalin Lazarillo and its role in axonal pathfinding in the grasshopper embryo.</title>
        <authorList>
            <person name="Sanchez D."/>
            <person name="Ganfornina M.D."/>
            <person name="Bastiani M.J."/>
        </authorList>
    </citation>
    <scope>POSSIBLE FUNCTION</scope>
</reference>
<evidence type="ECO:0000255" key="1"/>
<evidence type="ECO:0000305" key="2"/>
<accession>P49291</accession>
<name>LAZA_SCHAM</name>